<reference key="1">
    <citation type="journal article" date="2004" name="Nat. Biotechnol.">
        <title>Complete sequence and comparative genome analysis of the dairy bacterium Streptococcus thermophilus.</title>
        <authorList>
            <person name="Bolotin A."/>
            <person name="Quinquis B."/>
            <person name="Renault P."/>
            <person name="Sorokin A."/>
            <person name="Ehrlich S.D."/>
            <person name="Kulakauskas S."/>
            <person name="Lapidus A."/>
            <person name="Goltsman E."/>
            <person name="Mazur M."/>
            <person name="Pusch G.D."/>
            <person name="Fonstein M."/>
            <person name="Overbeek R."/>
            <person name="Kyprides N."/>
            <person name="Purnelle B."/>
            <person name="Prozzi D."/>
            <person name="Ngui K."/>
            <person name="Masuy D."/>
            <person name="Hancy F."/>
            <person name="Burteau S."/>
            <person name="Boutry M."/>
            <person name="Delcour J."/>
            <person name="Goffeau A."/>
            <person name="Hols P."/>
        </authorList>
    </citation>
    <scope>NUCLEOTIDE SEQUENCE [LARGE SCALE GENOMIC DNA]</scope>
    <source>
        <strain>ATCC BAA-250 / LMG 18311</strain>
    </source>
</reference>
<dbReference type="EC" id="6.1.1.1"/>
<dbReference type="EMBL" id="CP000023">
    <property type="protein sequence ID" value="AAV60695.1"/>
    <property type="molecule type" value="Genomic_DNA"/>
</dbReference>
<dbReference type="RefSeq" id="WP_002948690.1">
    <property type="nucleotide sequence ID" value="NC_006448.1"/>
</dbReference>
<dbReference type="SMR" id="Q5M4D1"/>
<dbReference type="STRING" id="264199.stu1043"/>
<dbReference type="GeneID" id="66898879"/>
<dbReference type="KEGG" id="stl:stu1043"/>
<dbReference type="eggNOG" id="COG0162">
    <property type="taxonomic scope" value="Bacteria"/>
</dbReference>
<dbReference type="HOGENOM" id="CLU_024003_0_0_9"/>
<dbReference type="Proteomes" id="UP000001170">
    <property type="component" value="Chromosome"/>
</dbReference>
<dbReference type="GO" id="GO:0005829">
    <property type="term" value="C:cytosol"/>
    <property type="evidence" value="ECO:0007669"/>
    <property type="project" value="TreeGrafter"/>
</dbReference>
<dbReference type="GO" id="GO:0005524">
    <property type="term" value="F:ATP binding"/>
    <property type="evidence" value="ECO:0007669"/>
    <property type="project" value="UniProtKB-KW"/>
</dbReference>
<dbReference type="GO" id="GO:0003723">
    <property type="term" value="F:RNA binding"/>
    <property type="evidence" value="ECO:0007669"/>
    <property type="project" value="UniProtKB-KW"/>
</dbReference>
<dbReference type="GO" id="GO:0004831">
    <property type="term" value="F:tyrosine-tRNA ligase activity"/>
    <property type="evidence" value="ECO:0007669"/>
    <property type="project" value="UniProtKB-EC"/>
</dbReference>
<dbReference type="GO" id="GO:0006437">
    <property type="term" value="P:tyrosyl-tRNA aminoacylation"/>
    <property type="evidence" value="ECO:0007669"/>
    <property type="project" value="InterPro"/>
</dbReference>
<dbReference type="CDD" id="cd00805">
    <property type="entry name" value="TyrRS_core"/>
    <property type="match status" value="1"/>
</dbReference>
<dbReference type="Gene3D" id="3.40.50.620">
    <property type="entry name" value="HUPs"/>
    <property type="match status" value="1"/>
</dbReference>
<dbReference type="Gene3D" id="1.10.240.10">
    <property type="entry name" value="Tyrosyl-Transfer RNA Synthetase"/>
    <property type="match status" value="1"/>
</dbReference>
<dbReference type="InterPro" id="IPR001412">
    <property type="entry name" value="aa-tRNA-synth_I_CS"/>
</dbReference>
<dbReference type="InterPro" id="IPR002305">
    <property type="entry name" value="aa-tRNA-synth_Ic"/>
</dbReference>
<dbReference type="InterPro" id="IPR014729">
    <property type="entry name" value="Rossmann-like_a/b/a_fold"/>
</dbReference>
<dbReference type="InterPro" id="IPR002307">
    <property type="entry name" value="Tyr-tRNA-ligase"/>
</dbReference>
<dbReference type="InterPro" id="IPR024088">
    <property type="entry name" value="Tyr-tRNA-ligase_bac-type"/>
</dbReference>
<dbReference type="NCBIfam" id="TIGR00234">
    <property type="entry name" value="tyrS"/>
    <property type="match status" value="1"/>
</dbReference>
<dbReference type="PANTHER" id="PTHR11766:SF0">
    <property type="entry name" value="TYROSINE--TRNA LIGASE, MITOCHONDRIAL"/>
    <property type="match status" value="1"/>
</dbReference>
<dbReference type="PANTHER" id="PTHR11766">
    <property type="entry name" value="TYROSYL-TRNA SYNTHETASE"/>
    <property type="match status" value="1"/>
</dbReference>
<dbReference type="Pfam" id="PF00579">
    <property type="entry name" value="tRNA-synt_1b"/>
    <property type="match status" value="1"/>
</dbReference>
<dbReference type="PRINTS" id="PR01040">
    <property type="entry name" value="TRNASYNTHTYR"/>
</dbReference>
<dbReference type="SUPFAM" id="SSF52374">
    <property type="entry name" value="Nucleotidylyl transferase"/>
    <property type="match status" value="1"/>
</dbReference>
<dbReference type="PROSITE" id="PS00178">
    <property type="entry name" value="AA_TRNA_LIGASE_I"/>
    <property type="match status" value="1"/>
</dbReference>
<feature type="chain" id="PRO_0000234796" description="Tyrosine--tRNA ligase 2">
    <location>
        <begin position="1"/>
        <end position="302"/>
    </location>
</feature>
<feature type="short sequence motif" description="'HIGH' region">
    <location>
        <begin position="38"/>
        <end position="47"/>
    </location>
</feature>
<feature type="short sequence motif" description="'KMSKS' region">
    <location>
        <begin position="220"/>
        <end position="224"/>
    </location>
</feature>
<feature type="binding site" evidence="1">
    <location>
        <position position="33"/>
    </location>
    <ligand>
        <name>L-tyrosine</name>
        <dbReference type="ChEBI" id="CHEBI:58315"/>
    </ligand>
</feature>
<feature type="binding site" evidence="1">
    <location>
        <position position="160"/>
    </location>
    <ligand>
        <name>L-tyrosine</name>
        <dbReference type="ChEBI" id="CHEBI:58315"/>
    </ligand>
</feature>
<feature type="binding site" evidence="1">
    <location>
        <position position="164"/>
    </location>
    <ligand>
        <name>L-tyrosine</name>
        <dbReference type="ChEBI" id="CHEBI:58315"/>
    </ligand>
</feature>
<feature type="binding site" evidence="1">
    <location>
        <position position="223"/>
    </location>
    <ligand>
        <name>ATP</name>
        <dbReference type="ChEBI" id="CHEBI:30616"/>
    </ligand>
</feature>
<organism>
    <name type="scientific">Streptococcus thermophilus (strain ATCC BAA-250 / LMG 18311)</name>
    <dbReference type="NCBI Taxonomy" id="264199"/>
    <lineage>
        <taxon>Bacteria</taxon>
        <taxon>Bacillati</taxon>
        <taxon>Bacillota</taxon>
        <taxon>Bacilli</taxon>
        <taxon>Lactobacillales</taxon>
        <taxon>Streptococcaceae</taxon>
        <taxon>Streptococcus</taxon>
    </lineage>
</organism>
<protein>
    <recommendedName>
        <fullName>Tyrosine--tRNA ligase 2</fullName>
        <ecNumber>6.1.1.1</ecNumber>
    </recommendedName>
    <alternativeName>
        <fullName>Tyrosyl-tRNA synthetase 2</fullName>
        <shortName>TyrRS 2</shortName>
    </alternativeName>
</protein>
<gene>
    <name type="primary">tyrS2</name>
    <name type="synonym">tyrSE</name>
    <name type="ordered locus">stu1043</name>
</gene>
<accession>Q5M4D1</accession>
<sequence>MKLFEDLQWRGLVKQYSSDSLIEKLNNGKLTFYIGTDPTADSLHLGHYSSFLIAKRLAKYGHQPIILIGGATALVGDPRGTSERDLAEQEKIFDNFEKLKNQIQKIFPYEIVNNYDWTKNIMAIDFLREFGKHITAGYMSNKELVKRQFATGISFTEFSYMLLQGMDFYHLFTTKGVTLQIAGSDQWGNMTTGIDLVRKKTGEEVFAMTMPLITDEEGKKFGKSEGNAIWISENKNTPEELHNFLLNVSDDIVISLLKKLTFLSRKDIEEIESRHKNGTGYAQGILADTVTFDIHGVSINKK</sequence>
<name>SYY2_STRT2</name>
<evidence type="ECO:0000250" key="1"/>
<evidence type="ECO:0000305" key="2"/>
<keyword id="KW-0030">Aminoacyl-tRNA synthetase</keyword>
<keyword id="KW-0067">ATP-binding</keyword>
<keyword id="KW-0963">Cytoplasm</keyword>
<keyword id="KW-0436">Ligase</keyword>
<keyword id="KW-0547">Nucleotide-binding</keyword>
<keyword id="KW-0648">Protein biosynthesis</keyword>
<keyword id="KW-1185">Reference proteome</keyword>
<keyword id="KW-0694">RNA-binding</keyword>
<proteinExistence type="inferred from homology"/>
<comment type="function">
    <text evidence="1">Catalyzes the attachment of tyrosine to tRNA(Tyr) in a two-step reaction: tyrosine is first activated by ATP to form Tyr-AMP and then transferred to the acceptor end of tRNA(Tyr).</text>
</comment>
<comment type="catalytic activity">
    <reaction>
        <text>tRNA(Tyr) + L-tyrosine + ATP = L-tyrosyl-tRNA(Tyr) + AMP + diphosphate + H(+)</text>
        <dbReference type="Rhea" id="RHEA:10220"/>
        <dbReference type="Rhea" id="RHEA-COMP:9706"/>
        <dbReference type="Rhea" id="RHEA-COMP:9707"/>
        <dbReference type="ChEBI" id="CHEBI:15378"/>
        <dbReference type="ChEBI" id="CHEBI:30616"/>
        <dbReference type="ChEBI" id="CHEBI:33019"/>
        <dbReference type="ChEBI" id="CHEBI:58315"/>
        <dbReference type="ChEBI" id="CHEBI:78442"/>
        <dbReference type="ChEBI" id="CHEBI:78536"/>
        <dbReference type="ChEBI" id="CHEBI:456215"/>
        <dbReference type="EC" id="6.1.1.1"/>
    </reaction>
</comment>
<comment type="subunit">
    <text evidence="1">Homodimer.</text>
</comment>
<comment type="subcellular location">
    <subcellularLocation>
        <location evidence="1">Cytoplasm</location>
    </subcellularLocation>
</comment>
<comment type="similarity">
    <text evidence="2">Belongs to the class-I aminoacyl-tRNA synthetase family. TyrS type 1 subfamily.</text>
</comment>